<accession>Q6GEE2</accession>
<protein>
    <recommendedName>
        <fullName evidence="1">Urease accessory protein UreF</fullName>
    </recommendedName>
</protein>
<reference key="1">
    <citation type="journal article" date="2004" name="Proc. Natl. Acad. Sci. U.S.A.">
        <title>Complete genomes of two clinical Staphylococcus aureus strains: evidence for the rapid evolution of virulence and drug resistance.</title>
        <authorList>
            <person name="Holden M.T.G."/>
            <person name="Feil E.J."/>
            <person name="Lindsay J.A."/>
            <person name="Peacock S.J."/>
            <person name="Day N.P.J."/>
            <person name="Enright M.C."/>
            <person name="Foster T.J."/>
            <person name="Moore C.E."/>
            <person name="Hurst L."/>
            <person name="Atkin R."/>
            <person name="Barron A."/>
            <person name="Bason N."/>
            <person name="Bentley S.D."/>
            <person name="Chillingworth C."/>
            <person name="Chillingworth T."/>
            <person name="Churcher C."/>
            <person name="Clark L."/>
            <person name="Corton C."/>
            <person name="Cronin A."/>
            <person name="Doggett J."/>
            <person name="Dowd L."/>
            <person name="Feltwell T."/>
            <person name="Hance Z."/>
            <person name="Harris B."/>
            <person name="Hauser H."/>
            <person name="Holroyd S."/>
            <person name="Jagels K."/>
            <person name="James K.D."/>
            <person name="Lennard N."/>
            <person name="Line A."/>
            <person name="Mayes R."/>
            <person name="Moule S."/>
            <person name="Mungall K."/>
            <person name="Ormond D."/>
            <person name="Quail M.A."/>
            <person name="Rabbinowitsch E."/>
            <person name="Rutherford K.M."/>
            <person name="Sanders M."/>
            <person name="Sharp S."/>
            <person name="Simmonds M."/>
            <person name="Stevens K."/>
            <person name="Whitehead S."/>
            <person name="Barrell B.G."/>
            <person name="Spratt B.G."/>
            <person name="Parkhill J."/>
        </authorList>
    </citation>
    <scope>NUCLEOTIDE SEQUENCE [LARGE SCALE GENOMIC DNA]</scope>
    <source>
        <strain>MRSA252</strain>
    </source>
</reference>
<proteinExistence type="inferred from homology"/>
<dbReference type="EMBL" id="BX571856">
    <property type="protein sequence ID" value="CAG41357.1"/>
    <property type="molecule type" value="Genomic_DNA"/>
</dbReference>
<dbReference type="RefSeq" id="WP_000565252.1">
    <property type="nucleotide sequence ID" value="NC_002952.2"/>
</dbReference>
<dbReference type="SMR" id="Q6GEE2"/>
<dbReference type="KEGG" id="sar:SAR2376"/>
<dbReference type="HOGENOM" id="CLU_049215_4_2_9"/>
<dbReference type="Proteomes" id="UP000000596">
    <property type="component" value="Chromosome"/>
</dbReference>
<dbReference type="GO" id="GO:0005737">
    <property type="term" value="C:cytoplasm"/>
    <property type="evidence" value="ECO:0007669"/>
    <property type="project" value="UniProtKB-SubCell"/>
</dbReference>
<dbReference type="GO" id="GO:0016151">
    <property type="term" value="F:nickel cation binding"/>
    <property type="evidence" value="ECO:0007669"/>
    <property type="project" value="UniProtKB-UniRule"/>
</dbReference>
<dbReference type="Gene3D" id="1.10.4190.10">
    <property type="entry name" value="Urease accessory protein UreF"/>
    <property type="match status" value="1"/>
</dbReference>
<dbReference type="HAMAP" id="MF_01385">
    <property type="entry name" value="UreF"/>
    <property type="match status" value="1"/>
</dbReference>
<dbReference type="InterPro" id="IPR002639">
    <property type="entry name" value="UreF"/>
</dbReference>
<dbReference type="InterPro" id="IPR038277">
    <property type="entry name" value="UreF_sf"/>
</dbReference>
<dbReference type="PANTHER" id="PTHR33620">
    <property type="entry name" value="UREASE ACCESSORY PROTEIN F"/>
    <property type="match status" value="1"/>
</dbReference>
<dbReference type="PANTHER" id="PTHR33620:SF1">
    <property type="entry name" value="UREASE ACCESSORY PROTEIN F"/>
    <property type="match status" value="1"/>
</dbReference>
<dbReference type="Pfam" id="PF01730">
    <property type="entry name" value="UreF"/>
    <property type="match status" value="1"/>
</dbReference>
<dbReference type="PIRSF" id="PIRSF009467">
    <property type="entry name" value="Ureas_acces_UreF"/>
    <property type="match status" value="1"/>
</dbReference>
<gene>
    <name evidence="1" type="primary">ureF</name>
    <name type="ordered locus">SAR2376</name>
</gene>
<name>UREF_STAAR</name>
<feature type="chain" id="PRO_0000344183" description="Urease accessory protein UreF">
    <location>
        <begin position="1"/>
        <end position="229"/>
    </location>
</feature>
<evidence type="ECO:0000255" key="1">
    <source>
        <dbReference type="HAMAP-Rule" id="MF_01385"/>
    </source>
</evidence>
<comment type="function">
    <text evidence="1">Required for maturation of urease via the functional incorporation of the urease nickel metallocenter.</text>
</comment>
<comment type="subunit">
    <text evidence="1">UreD, UreF and UreG form a complex that acts as a GTP-hydrolysis-dependent molecular chaperone, activating the urease apoprotein by helping to assemble the nickel containing metallocenter of UreC. The UreE protein probably delivers the nickel.</text>
</comment>
<comment type="subcellular location">
    <subcellularLocation>
        <location evidence="1">Cytoplasm</location>
    </subcellularLocation>
</comment>
<comment type="similarity">
    <text evidence="1">Belongs to the UreF family.</text>
</comment>
<organism>
    <name type="scientific">Staphylococcus aureus (strain MRSA252)</name>
    <dbReference type="NCBI Taxonomy" id="282458"/>
    <lineage>
        <taxon>Bacteria</taxon>
        <taxon>Bacillati</taxon>
        <taxon>Bacillota</taxon>
        <taxon>Bacilli</taxon>
        <taxon>Bacillales</taxon>
        <taxon>Staphylococcaceae</taxon>
        <taxon>Staphylococcus</taxon>
    </lineage>
</organism>
<sequence>MIDHTHLRLFQFCDSQFPTGAFSHSFGLETYIQRNIIHDDHTFIAWLKMFLQEQLTYSDGLAMRLVYDALENDDTQKVLHIDKLMFVQNLPKETRVGAKQMGTRMVKLALELYNNPWIAWYHQQMQDKKAKLNPAICFTMLGHYLGVDIETIIDYYLYQNVSSLTQNAVRAIPLGQTAGQKIVTHMIPYIEETRKQIFELKEADFGMTAPGLELNQMAHENVNVRIFIS</sequence>
<keyword id="KW-0143">Chaperone</keyword>
<keyword id="KW-0963">Cytoplasm</keyword>
<keyword id="KW-0996">Nickel insertion</keyword>